<organism>
    <name type="scientific">Dictyostelium discoideum</name>
    <name type="common">Social amoeba</name>
    <dbReference type="NCBI Taxonomy" id="44689"/>
    <lineage>
        <taxon>Eukaryota</taxon>
        <taxon>Amoebozoa</taxon>
        <taxon>Evosea</taxon>
        <taxon>Eumycetozoa</taxon>
        <taxon>Dictyostelia</taxon>
        <taxon>Dictyosteliales</taxon>
        <taxon>Dictyosteliaceae</taxon>
        <taxon>Dictyostelium</taxon>
    </lineage>
</organism>
<protein>
    <recommendedName>
        <fullName evidence="3">Small ribosomal subunit protein uS14m</fullName>
    </recommendedName>
    <alternativeName>
        <fullName>Ribosomal protein S14, mitochondrial</fullName>
        <shortName>MRP-S14</shortName>
        <shortName>S14mt</shortName>
    </alternativeName>
</protein>
<reference key="1">
    <citation type="journal article" date="1998" name="Curr. Genet.">
        <title>A ribosomal protein gene cluster is encoded in the mitochondrial DNA of Dictyostelium discoideum: UGA termination codons and similarity of gene order to Acanthamoeba castellanii.</title>
        <authorList>
            <person name="Iwamoto M."/>
            <person name="Pi M."/>
            <person name="Kurihara M."/>
            <person name="Morio T."/>
            <person name="Tanaka Y."/>
        </authorList>
    </citation>
    <scope>NUCLEOTIDE SEQUENCE [GENOMIC DNA]</scope>
    <source>
        <strain>AX3</strain>
    </source>
</reference>
<reference key="2">
    <citation type="journal article" date="2000" name="Mol. Gen. Genet.">
        <title>The mitochondrial DNA of Dictyostelium discoideum: complete sequence, gene content and genome organization.</title>
        <authorList>
            <person name="Ogawa S."/>
            <person name="Yoshino R."/>
            <person name="Angata K."/>
            <person name="Iwamoto M."/>
            <person name="Pi M."/>
            <person name="Kuroe K."/>
            <person name="Matsuo K."/>
            <person name="Morio T."/>
            <person name="Urushihara H."/>
            <person name="Yanagisawa K."/>
            <person name="Tanaka Y."/>
        </authorList>
    </citation>
    <scope>NUCLEOTIDE SEQUENCE [LARGE SCALE GENOMIC DNA]</scope>
    <source>
        <strain>AX3</strain>
    </source>
</reference>
<sequence length="101" mass="12279">MKIIRKNKKDKERREIYKQAEKMKNMYKMLRRNELLDQETRNYFNMKVTSSEKNSSISRIKNRCVETGRSRGIISAYRISRLRFREYMKMGLISGVKKISY</sequence>
<name>RT14_DICDI</name>
<feature type="chain" id="PRO_0000312379" description="Small ribosomal subunit protein uS14m">
    <location>
        <begin position="1"/>
        <end position="101"/>
    </location>
</feature>
<accession>O21035</accession>
<proteinExistence type="inferred from homology"/>
<comment type="subunit">
    <text evidence="1 2">Component of the mitochondrial ribosome small subunit (28S) which comprises a 12S rRNA and about 30 distinct proteins (By similarity). Interacts with LIAT1 (By similarity).</text>
</comment>
<comment type="subcellular location">
    <subcellularLocation>
        <location evidence="1">Mitochondrion</location>
    </subcellularLocation>
</comment>
<comment type="similarity">
    <text evidence="3">Belongs to the universal ribosomal protein uS14 family.</text>
</comment>
<evidence type="ECO:0000250" key="1">
    <source>
        <dbReference type="UniProtKB" id="O60783"/>
    </source>
</evidence>
<evidence type="ECO:0000250" key="2">
    <source>
        <dbReference type="UniProtKB" id="Q9CR88"/>
    </source>
</evidence>
<evidence type="ECO:0000305" key="3"/>
<dbReference type="EMBL" id="D63523">
    <property type="protein sequence ID" value="BAA23572.1"/>
    <property type="molecule type" value="Genomic_DNA"/>
</dbReference>
<dbReference type="EMBL" id="AB000109">
    <property type="protein sequence ID" value="BAA78080.1"/>
    <property type="molecule type" value="Genomic_DNA"/>
</dbReference>
<dbReference type="PIR" id="T43777">
    <property type="entry name" value="T43777"/>
</dbReference>
<dbReference type="RefSeq" id="NP_050098.1">
    <property type="nucleotide sequence ID" value="NC_000895.1"/>
</dbReference>
<dbReference type="SMR" id="O21035"/>
<dbReference type="FunCoup" id="O21035">
    <property type="interactions" value="294"/>
</dbReference>
<dbReference type="STRING" id="44689.O21035"/>
<dbReference type="GeneID" id="2193923"/>
<dbReference type="KEGG" id="ddi:DidioMp31"/>
<dbReference type="dictyBase" id="DDB_G0294062">
    <property type="gene designation" value="mrps14"/>
</dbReference>
<dbReference type="VEuPathDB" id="AmoebaDB:DidioMp31"/>
<dbReference type="InParanoid" id="O21035"/>
<dbReference type="OMA" id="ENERMQY"/>
<dbReference type="PhylomeDB" id="O21035"/>
<dbReference type="PRO" id="PR:O21035"/>
<dbReference type="Proteomes" id="UP000002195">
    <property type="component" value="Mitochondrion"/>
</dbReference>
<dbReference type="GO" id="GO:0005763">
    <property type="term" value="C:mitochondrial small ribosomal subunit"/>
    <property type="evidence" value="ECO:0000250"/>
    <property type="project" value="UniProtKB"/>
</dbReference>
<dbReference type="GO" id="GO:0003735">
    <property type="term" value="F:structural constituent of ribosome"/>
    <property type="evidence" value="ECO:0000318"/>
    <property type="project" value="GO_Central"/>
</dbReference>
<dbReference type="GO" id="GO:0006412">
    <property type="term" value="P:translation"/>
    <property type="evidence" value="ECO:0000318"/>
    <property type="project" value="GO_Central"/>
</dbReference>
<dbReference type="FunFam" id="1.10.287.1480:FF:000001">
    <property type="entry name" value="30S ribosomal protein S14"/>
    <property type="match status" value="1"/>
</dbReference>
<dbReference type="Gene3D" id="1.10.287.1480">
    <property type="match status" value="1"/>
</dbReference>
<dbReference type="InterPro" id="IPR001209">
    <property type="entry name" value="Ribosomal_uS14"/>
</dbReference>
<dbReference type="PANTHER" id="PTHR19836">
    <property type="entry name" value="30S RIBOSOMAL PROTEIN S14"/>
    <property type="match status" value="1"/>
</dbReference>
<dbReference type="PANTHER" id="PTHR19836:SF19">
    <property type="entry name" value="SMALL RIBOSOMAL SUBUNIT PROTEIN US14M"/>
    <property type="match status" value="1"/>
</dbReference>
<dbReference type="Pfam" id="PF00253">
    <property type="entry name" value="Ribosomal_S14"/>
    <property type="match status" value="1"/>
</dbReference>
<dbReference type="SUPFAM" id="SSF57716">
    <property type="entry name" value="Glucocorticoid receptor-like (DNA-binding domain)"/>
    <property type="match status" value="1"/>
</dbReference>
<geneLocation type="mitochondrion"/>
<keyword id="KW-0496">Mitochondrion</keyword>
<keyword id="KW-1185">Reference proteome</keyword>
<keyword id="KW-0687">Ribonucleoprotein</keyword>
<keyword id="KW-0689">Ribosomal protein</keyword>
<gene>
    <name type="primary">mrps14</name>
    <name type="synonym">rps14</name>
    <name type="ORF">DDB_G0294062</name>
</gene>